<proteinExistence type="evidence at transcript level"/>
<protein>
    <recommendedName>
        <fullName evidence="5">Efflux pump aflT</fullName>
    </recommendedName>
    <alternativeName>
        <fullName evidence="4">Aflatoxin biosynthesis protein T</fullName>
    </alternativeName>
</protein>
<reference key="1">
    <citation type="journal article" date="2004" name="Appl. Environ. Microbiol.">
        <title>Clustered pathway genes in aflatoxin biosynthesis.</title>
        <authorList>
            <person name="Yu J."/>
            <person name="Chang P.K."/>
            <person name="Ehrlich K.C."/>
            <person name="Cary J.W."/>
            <person name="Bhatnagar D."/>
            <person name="Cleveland T.E."/>
            <person name="Payne G.A."/>
            <person name="Linz J.E."/>
            <person name="Woloshuk C.P."/>
            <person name="Bennett J.W."/>
        </authorList>
    </citation>
    <scope>NUCLEOTIDE SEQUENCE [GENOMIC DNA]</scope>
    <scope>FUNCTION</scope>
    <scope>NOMENCLATURE</scope>
    <source>
        <strain>ATCC 56775 / NRRL 5862 / SRRC 143 / SU-1</strain>
    </source>
</reference>
<reference key="2">
    <citation type="journal article" date="2004" name="FEBS Lett.">
        <title>Completed sequence of aflatoxin pathway gene cluster in Aspergillus parasiticus.</title>
        <authorList>
            <person name="Yu J."/>
            <person name="Bhatnagar D."/>
            <person name="Cleveland T.E."/>
        </authorList>
    </citation>
    <scope>NUCLEOTIDE SEQUENCE [GENOMIC DNA]</scope>
    <scope>FUNCTION</scope>
    <source>
        <strain>ATCC 56775 / NRRL 5862 / SRRC 143 / SU-1</strain>
    </source>
</reference>
<reference key="3">
    <citation type="submission" date="2015-02" db="EMBL/GenBank/DDBJ databases">
        <title>Draft genome sequence of Aspergillus parasiticus SU-1.</title>
        <authorList>
            <person name="Yu J."/>
            <person name="Fedorova N."/>
            <person name="Yin Y."/>
            <person name="Losada L."/>
            <person name="Zafar N."/>
            <person name="Taujale R."/>
            <person name="Ehrlich K.C."/>
            <person name="Bhatnagar D."/>
            <person name="Cleveland T.E."/>
            <person name="Bennett J.W."/>
            <person name="Nierman W.C."/>
        </authorList>
    </citation>
    <scope>NUCLEOTIDE SEQUENCE [LARGE SCALE GENOMIC DNA]</scope>
    <source>
        <strain>ATCC 56775 / NRRL 5862 / SRRC 143 / SU-1</strain>
    </source>
</reference>
<reference key="4">
    <citation type="journal article" date="2004" name="Fungal Genet. Biol.">
        <title>aflT, a MFS transporter-encoding gene located in the aflatoxin gene cluster, does not have a significant role in aflatoxin secretion.</title>
        <authorList>
            <person name="Chang P.K."/>
            <person name="Yu J."/>
            <person name="Yu J.H."/>
        </authorList>
    </citation>
    <scope>DISRUPTION PHENOTYPE</scope>
    <scope>INDUCTION</scope>
</reference>
<evidence type="ECO:0000255" key="1"/>
<evidence type="ECO:0000255" key="2">
    <source>
        <dbReference type="PROSITE-ProRule" id="PRU00498"/>
    </source>
</evidence>
<evidence type="ECO:0000269" key="3">
    <source>
    </source>
</evidence>
<evidence type="ECO:0000303" key="4">
    <source>
    </source>
</evidence>
<evidence type="ECO:0000305" key="5"/>
<evidence type="ECO:0000305" key="6">
    <source>
    </source>
</evidence>
<evidence type="ECO:0000305" key="7">
    <source>
    </source>
</evidence>
<comment type="function">
    <text evidence="6 7">Efflux pump; part of the gene cluster that mediates the biosynthesis of aflatoxins (PubMed:15006741, PubMed:15094053).</text>
</comment>
<comment type="subcellular location">
    <subcellularLocation>
        <location evidence="5">Cell membrane</location>
        <topology evidence="1">Multi-pass membrane protein</topology>
    </subcellularLocation>
</comment>
<comment type="induction">
    <text evidence="3">Expression is not regulated by the aflatoxin pathway aflR activator or aflS coactivator but by the fadA-dependent signaling pathway (PubMed:15341913).</text>
</comment>
<comment type="disruption phenotype">
    <text evidence="3">Does not affect aflatoxin secretion (PubMed:15341913).</text>
</comment>
<comment type="similarity">
    <text evidence="5">Belongs to the major facilitator superfamily. TCR/Tet family.</text>
</comment>
<comment type="sequence caution" evidence="5">
    <conflict type="erroneous gene model prediction">
        <sequence resource="EMBL-CDS" id="KJK60792"/>
    </conflict>
    <text>The predicted gene P875_00052986 has been split into 2 genes: P875_00052986-1 (aflU) and P875_00052986-2 (aflT).</text>
</comment>
<sequence>MLIDEAAEASSHISGMKLYLIVLSLLLAVFCVALDNTILSVAIPRITDEFHRLNDIGWYASAYLLTTCAFQLLYGKLYALFSTKWVFLVALCIFEVGSLICGVAPSSVVLIVGRAIAGVGSSGIFTGALVTIAHIVPLAKRPVYMGLLGGMYGIASVAGPLLGGAFTNEVTWRWCFYINLPVGGVTAVVILFLLRIPKSADLRTHGAWEMLKGLDPLGTIVFTPSIICVLLALQWGGVDYAWSNGRIIALFVLFGVLLITFIIIQVLMKDKATVPIKVASQRSVACASVFVFFIGASMFVMIYYVPIWFQAIRNQSPVQAGIDSIALILANTAGAIISGAVTNKTGHYAPWFIVSSVIMSIGAGCLTLFTVDIAQSKWIGFLFLYGIGVGFGFQQGAVAVQAVLPMAQVPIGTALIWFVQMLGGALFTSVAQNIFSTHLAENLANLQLPGLDPEAIVGAGATGFRQLVQPEYMDQVLVAYNAALLDVFQVALICSCLSILGAVGIEWRSVKQNR</sequence>
<organism>
    <name type="scientific">Aspergillus parasiticus (strain ATCC 56775 / NRRL 5862 / SRRC 143 / SU-1)</name>
    <dbReference type="NCBI Taxonomy" id="1403190"/>
    <lineage>
        <taxon>Eukaryota</taxon>
        <taxon>Fungi</taxon>
        <taxon>Dikarya</taxon>
        <taxon>Ascomycota</taxon>
        <taxon>Pezizomycotina</taxon>
        <taxon>Eurotiomycetes</taxon>
        <taxon>Eurotiomycetidae</taxon>
        <taxon>Eurotiales</taxon>
        <taxon>Aspergillaceae</taxon>
        <taxon>Aspergillus</taxon>
        <taxon>Aspergillus subgen. Circumdati</taxon>
    </lineage>
</organism>
<feature type="chain" id="PRO_0000438340" description="Efflux pump aflT">
    <location>
        <begin position="1"/>
        <end position="514"/>
    </location>
</feature>
<feature type="transmembrane region" description="Helical" evidence="1">
    <location>
        <begin position="13"/>
        <end position="33"/>
    </location>
</feature>
<feature type="transmembrane region" description="Helical" evidence="1">
    <location>
        <begin position="61"/>
        <end position="81"/>
    </location>
</feature>
<feature type="transmembrane region" description="Helical" evidence="1">
    <location>
        <begin position="85"/>
        <end position="105"/>
    </location>
</feature>
<feature type="transmembrane region" description="Helical" evidence="1">
    <location>
        <begin position="116"/>
        <end position="136"/>
    </location>
</feature>
<feature type="transmembrane region" description="Helical" evidence="1">
    <location>
        <begin position="146"/>
        <end position="166"/>
    </location>
</feature>
<feature type="transmembrane region" description="Helical" evidence="1">
    <location>
        <begin position="174"/>
        <end position="194"/>
    </location>
</feature>
<feature type="transmembrane region" description="Helical" evidence="1">
    <location>
        <begin position="218"/>
        <end position="238"/>
    </location>
</feature>
<feature type="transmembrane region" description="Helical" evidence="1">
    <location>
        <begin position="247"/>
        <end position="267"/>
    </location>
</feature>
<feature type="transmembrane region" description="Helical" evidence="1">
    <location>
        <begin position="289"/>
        <end position="309"/>
    </location>
</feature>
<feature type="transmembrane region" description="Helical" evidence="1">
    <location>
        <begin position="321"/>
        <end position="341"/>
    </location>
</feature>
<feature type="transmembrane region" description="Helical" evidence="1">
    <location>
        <begin position="351"/>
        <end position="371"/>
    </location>
</feature>
<feature type="transmembrane region" description="Helical" evidence="1">
    <location>
        <begin position="378"/>
        <end position="398"/>
    </location>
</feature>
<feature type="transmembrane region" description="Helical" evidence="1">
    <location>
        <begin position="411"/>
        <end position="431"/>
    </location>
</feature>
<feature type="transmembrane region" description="Helical" evidence="1">
    <location>
        <begin position="485"/>
        <end position="505"/>
    </location>
</feature>
<feature type="glycosylation site" description="N-linked (GlcNAc...) asparagine" evidence="2">
    <location>
        <position position="343"/>
    </location>
</feature>
<dbReference type="EMBL" id="AY371490">
    <property type="protein sequence ID" value="AAS66020.1"/>
    <property type="molecule type" value="Genomic_DNA"/>
</dbReference>
<dbReference type="EMBL" id="JZEE01000728">
    <property type="protein sequence ID" value="KJK60792.1"/>
    <property type="status" value="ALT_SEQ"/>
    <property type="molecule type" value="Genomic_DNA"/>
</dbReference>
<dbReference type="SMR" id="Q6UEH3"/>
<dbReference type="STRING" id="1403190.Q6UEH3"/>
<dbReference type="TCDB" id="2.A.1.3.83">
    <property type="family name" value="the major facilitator superfamily (mfs)"/>
</dbReference>
<dbReference type="GlyCosmos" id="Q6UEH3">
    <property type="glycosylation" value="1 site, No reported glycans"/>
</dbReference>
<dbReference type="OrthoDB" id="10021397at2759"/>
<dbReference type="Proteomes" id="UP000033540">
    <property type="component" value="Unassembled WGS sequence"/>
</dbReference>
<dbReference type="GO" id="GO:0005886">
    <property type="term" value="C:plasma membrane"/>
    <property type="evidence" value="ECO:0007669"/>
    <property type="project" value="UniProtKB-SubCell"/>
</dbReference>
<dbReference type="GO" id="GO:0022857">
    <property type="term" value="F:transmembrane transporter activity"/>
    <property type="evidence" value="ECO:0007669"/>
    <property type="project" value="InterPro"/>
</dbReference>
<dbReference type="CDD" id="cd17502">
    <property type="entry name" value="MFS_Azr1_MDR_like"/>
    <property type="match status" value="1"/>
</dbReference>
<dbReference type="FunFam" id="1.20.1250.20:FF:000489">
    <property type="entry name" value="MFS general substrate transporter"/>
    <property type="match status" value="1"/>
</dbReference>
<dbReference type="FunFam" id="1.20.1250.20:FF:000196">
    <property type="entry name" value="MFS toxin efflux pump (AflT)"/>
    <property type="match status" value="1"/>
</dbReference>
<dbReference type="FunFam" id="1.20.1720.10:FF:000012">
    <property type="entry name" value="MFS toxin efflux pump (AflT)"/>
    <property type="match status" value="1"/>
</dbReference>
<dbReference type="Gene3D" id="1.20.1250.20">
    <property type="entry name" value="MFS general substrate transporter like domains"/>
    <property type="match status" value="1"/>
</dbReference>
<dbReference type="Gene3D" id="1.20.1720.10">
    <property type="entry name" value="Multidrug resistance protein D"/>
    <property type="match status" value="1"/>
</dbReference>
<dbReference type="InterPro" id="IPR011701">
    <property type="entry name" value="MFS"/>
</dbReference>
<dbReference type="InterPro" id="IPR020846">
    <property type="entry name" value="MFS_dom"/>
</dbReference>
<dbReference type="InterPro" id="IPR036259">
    <property type="entry name" value="MFS_trans_sf"/>
</dbReference>
<dbReference type="PANTHER" id="PTHR23501">
    <property type="entry name" value="MAJOR FACILITATOR SUPERFAMILY"/>
    <property type="match status" value="1"/>
</dbReference>
<dbReference type="PANTHER" id="PTHR23501:SF201">
    <property type="entry name" value="MFS AFLATOXIN EFFLUX PUMP"/>
    <property type="match status" value="1"/>
</dbReference>
<dbReference type="Pfam" id="PF07690">
    <property type="entry name" value="MFS_1"/>
    <property type="match status" value="1"/>
</dbReference>
<dbReference type="PRINTS" id="PR01036">
    <property type="entry name" value="TCRTETB"/>
</dbReference>
<dbReference type="SUPFAM" id="SSF103473">
    <property type="entry name" value="MFS general substrate transporter"/>
    <property type="match status" value="1"/>
</dbReference>
<dbReference type="PROSITE" id="PS50850">
    <property type="entry name" value="MFS"/>
    <property type="match status" value="1"/>
</dbReference>
<keyword id="KW-1003">Cell membrane</keyword>
<keyword id="KW-0325">Glycoprotein</keyword>
<keyword id="KW-0472">Membrane</keyword>
<keyword id="KW-1185">Reference proteome</keyword>
<keyword id="KW-0812">Transmembrane</keyword>
<keyword id="KW-1133">Transmembrane helix</keyword>
<keyword id="KW-0813">Transport</keyword>
<accession>Q6UEH3</accession>
<accession>A0A0F0I2C7</accession>
<gene>
    <name evidence="4" type="primary">aflT</name>
    <name type="ORF">P875_00052986-2</name>
</gene>
<name>AFLT_ASPPU</name>